<proteinExistence type="inferred from homology"/>
<keyword id="KW-1185">Reference proteome</keyword>
<keyword id="KW-0687">Ribonucleoprotein</keyword>
<keyword id="KW-0689">Ribosomal protein</keyword>
<feature type="chain" id="PRO_1000007427" description="Large ribosomal subunit protein uL29">
    <location>
        <begin position="1"/>
        <end position="68"/>
    </location>
</feature>
<organism>
    <name type="scientific">Bradyrhizobium sp. (strain BTAi1 / ATCC BAA-1182)</name>
    <dbReference type="NCBI Taxonomy" id="288000"/>
    <lineage>
        <taxon>Bacteria</taxon>
        <taxon>Pseudomonadati</taxon>
        <taxon>Pseudomonadota</taxon>
        <taxon>Alphaproteobacteria</taxon>
        <taxon>Hyphomicrobiales</taxon>
        <taxon>Nitrobacteraceae</taxon>
        <taxon>Bradyrhizobium</taxon>
    </lineage>
</organism>
<reference key="1">
    <citation type="journal article" date="2007" name="Science">
        <title>Legumes symbioses: absence of nod genes in photosynthetic bradyrhizobia.</title>
        <authorList>
            <person name="Giraud E."/>
            <person name="Moulin L."/>
            <person name="Vallenet D."/>
            <person name="Barbe V."/>
            <person name="Cytryn E."/>
            <person name="Avarre J.-C."/>
            <person name="Jaubert M."/>
            <person name="Simon D."/>
            <person name="Cartieaux F."/>
            <person name="Prin Y."/>
            <person name="Bena G."/>
            <person name="Hannibal L."/>
            <person name="Fardoux J."/>
            <person name="Kojadinovic M."/>
            <person name="Vuillet L."/>
            <person name="Lajus A."/>
            <person name="Cruveiller S."/>
            <person name="Rouy Z."/>
            <person name="Mangenot S."/>
            <person name="Segurens B."/>
            <person name="Dossat C."/>
            <person name="Franck W.L."/>
            <person name="Chang W.-S."/>
            <person name="Saunders E."/>
            <person name="Bruce D."/>
            <person name="Richardson P."/>
            <person name="Normand P."/>
            <person name="Dreyfus B."/>
            <person name="Pignol D."/>
            <person name="Stacey G."/>
            <person name="Emerich D."/>
            <person name="Vermeglio A."/>
            <person name="Medigue C."/>
            <person name="Sadowsky M."/>
        </authorList>
    </citation>
    <scope>NUCLEOTIDE SEQUENCE [LARGE SCALE GENOMIC DNA]</scope>
    <source>
        <strain>BTAi1 / ATCC BAA-1182</strain>
    </source>
</reference>
<accession>A5ELL9</accession>
<dbReference type="EMBL" id="CP000494">
    <property type="protein sequence ID" value="ABQ37063.1"/>
    <property type="molecule type" value="Genomic_DNA"/>
</dbReference>
<dbReference type="RefSeq" id="WP_006611846.1">
    <property type="nucleotide sequence ID" value="NC_009485.1"/>
</dbReference>
<dbReference type="SMR" id="A5ELL9"/>
<dbReference type="STRING" id="288000.BBta_5062"/>
<dbReference type="KEGG" id="bbt:BBta_5062"/>
<dbReference type="eggNOG" id="COG0255">
    <property type="taxonomic scope" value="Bacteria"/>
</dbReference>
<dbReference type="HOGENOM" id="CLU_158491_1_0_5"/>
<dbReference type="OrthoDB" id="9815192at2"/>
<dbReference type="Proteomes" id="UP000000246">
    <property type="component" value="Chromosome"/>
</dbReference>
<dbReference type="GO" id="GO:0022625">
    <property type="term" value="C:cytosolic large ribosomal subunit"/>
    <property type="evidence" value="ECO:0007669"/>
    <property type="project" value="TreeGrafter"/>
</dbReference>
<dbReference type="GO" id="GO:0003735">
    <property type="term" value="F:structural constituent of ribosome"/>
    <property type="evidence" value="ECO:0007669"/>
    <property type="project" value="InterPro"/>
</dbReference>
<dbReference type="GO" id="GO:0006412">
    <property type="term" value="P:translation"/>
    <property type="evidence" value="ECO:0007669"/>
    <property type="project" value="UniProtKB-UniRule"/>
</dbReference>
<dbReference type="CDD" id="cd00427">
    <property type="entry name" value="Ribosomal_L29_HIP"/>
    <property type="match status" value="1"/>
</dbReference>
<dbReference type="FunFam" id="1.10.287.310:FF:000005">
    <property type="entry name" value="50S ribosomal protein L29"/>
    <property type="match status" value="1"/>
</dbReference>
<dbReference type="Gene3D" id="1.10.287.310">
    <property type="match status" value="1"/>
</dbReference>
<dbReference type="HAMAP" id="MF_00374">
    <property type="entry name" value="Ribosomal_uL29"/>
    <property type="match status" value="1"/>
</dbReference>
<dbReference type="InterPro" id="IPR050063">
    <property type="entry name" value="Ribosomal_protein_uL29"/>
</dbReference>
<dbReference type="InterPro" id="IPR001854">
    <property type="entry name" value="Ribosomal_uL29"/>
</dbReference>
<dbReference type="InterPro" id="IPR018254">
    <property type="entry name" value="Ribosomal_uL29_CS"/>
</dbReference>
<dbReference type="InterPro" id="IPR036049">
    <property type="entry name" value="Ribosomal_uL29_sf"/>
</dbReference>
<dbReference type="NCBIfam" id="TIGR00012">
    <property type="entry name" value="L29"/>
    <property type="match status" value="1"/>
</dbReference>
<dbReference type="PANTHER" id="PTHR10916">
    <property type="entry name" value="60S RIBOSOMAL PROTEIN L35/50S RIBOSOMAL PROTEIN L29"/>
    <property type="match status" value="1"/>
</dbReference>
<dbReference type="PANTHER" id="PTHR10916:SF0">
    <property type="entry name" value="LARGE RIBOSOMAL SUBUNIT PROTEIN UL29C"/>
    <property type="match status" value="1"/>
</dbReference>
<dbReference type="Pfam" id="PF00831">
    <property type="entry name" value="Ribosomal_L29"/>
    <property type="match status" value="1"/>
</dbReference>
<dbReference type="SUPFAM" id="SSF46561">
    <property type="entry name" value="Ribosomal protein L29 (L29p)"/>
    <property type="match status" value="1"/>
</dbReference>
<dbReference type="PROSITE" id="PS00579">
    <property type="entry name" value="RIBOSOMAL_L29"/>
    <property type="match status" value="1"/>
</dbReference>
<protein>
    <recommendedName>
        <fullName evidence="1">Large ribosomal subunit protein uL29</fullName>
    </recommendedName>
    <alternativeName>
        <fullName evidence="2">50S ribosomal protein L29</fullName>
    </alternativeName>
</protein>
<evidence type="ECO:0000255" key="1">
    <source>
        <dbReference type="HAMAP-Rule" id="MF_00374"/>
    </source>
</evidence>
<evidence type="ECO:0000305" key="2"/>
<name>RL29_BRASB</name>
<sequence>MAEMKIADIRAMSPDQMDDAIVNLKKERFNLRFQRATGQLENTARLREARRDIARIKTIAAQQRAKTK</sequence>
<comment type="similarity">
    <text evidence="1">Belongs to the universal ribosomal protein uL29 family.</text>
</comment>
<gene>
    <name evidence="1" type="primary">rpmC</name>
    <name type="ordered locus">BBta_5062</name>
</gene>